<keyword id="KW-0002">3D-structure</keyword>
<keyword id="KW-0227">DNA damage</keyword>
<keyword id="KW-0233">DNA recombination</keyword>
<keyword id="KW-0234">DNA repair</keyword>
<keyword id="KW-0238">DNA-binding</keyword>
<keyword id="KW-0255">Endonuclease</keyword>
<keyword id="KW-0378">Hydrolase</keyword>
<keyword id="KW-0460">Magnesium</keyword>
<keyword id="KW-0479">Metal-binding</keyword>
<keyword id="KW-0540">Nuclease</keyword>
<keyword id="KW-1185">Reference proteome</keyword>
<dbReference type="EC" id="3.1.21.10" evidence="2"/>
<dbReference type="EMBL" id="Y18930">
    <property type="protein sequence ID" value="CAB57725.1"/>
    <property type="molecule type" value="Genomic_DNA"/>
</dbReference>
<dbReference type="EMBL" id="AE006641">
    <property type="protein sequence ID" value="AAK40889.1"/>
    <property type="molecule type" value="Genomic_DNA"/>
</dbReference>
<dbReference type="PIR" id="B90204">
    <property type="entry name" value="B90204"/>
</dbReference>
<dbReference type="RefSeq" id="WP_009991087.1">
    <property type="nucleotide sequence ID" value="NC_002754.1"/>
</dbReference>
<dbReference type="PDB" id="1HH1">
    <property type="method" value="X-ray"/>
    <property type="resolution" value="2.15 A"/>
    <property type="chains" value="A=1-143"/>
</dbReference>
<dbReference type="PDB" id="4TKD">
    <property type="method" value="X-ray"/>
    <property type="resolution" value="2.01 A"/>
    <property type="chains" value="A/B/C/D=1-143"/>
</dbReference>
<dbReference type="PDB" id="4TKK">
    <property type="method" value="X-ray"/>
    <property type="resolution" value="2.40 A"/>
    <property type="chains" value="A/B=1-143"/>
</dbReference>
<dbReference type="PDBsum" id="1HH1"/>
<dbReference type="PDBsum" id="4TKD"/>
<dbReference type="PDBsum" id="4TKK"/>
<dbReference type="SMR" id="Q7LXU0"/>
<dbReference type="STRING" id="273057.SSO0575"/>
<dbReference type="PaxDb" id="273057-SSO0575"/>
<dbReference type="EnsemblBacteria" id="AAK40889">
    <property type="protein sequence ID" value="AAK40889"/>
    <property type="gene ID" value="SSO0575"/>
</dbReference>
<dbReference type="GeneID" id="44129578"/>
<dbReference type="KEGG" id="sso:SSO0575"/>
<dbReference type="PATRIC" id="fig|273057.12.peg.583"/>
<dbReference type="eggNOG" id="arCOG00919">
    <property type="taxonomic scope" value="Archaea"/>
</dbReference>
<dbReference type="HOGENOM" id="CLU_139546_1_0_2"/>
<dbReference type="InParanoid" id="Q7LXU0"/>
<dbReference type="PhylomeDB" id="Q7LXU0"/>
<dbReference type="BRENDA" id="3.1.21.10">
    <property type="organism ID" value="6163"/>
</dbReference>
<dbReference type="EvolutionaryTrace" id="Q7LXU0"/>
<dbReference type="Proteomes" id="UP000001974">
    <property type="component" value="Chromosome"/>
</dbReference>
<dbReference type="GO" id="GO:0008821">
    <property type="term" value="F:crossover junction DNA endonuclease activity"/>
    <property type="evidence" value="ECO:0007669"/>
    <property type="project" value="UniProtKB-UniRule"/>
</dbReference>
<dbReference type="GO" id="GO:0003677">
    <property type="term" value="F:DNA binding"/>
    <property type="evidence" value="ECO:0007669"/>
    <property type="project" value="UniProtKB-KW"/>
</dbReference>
<dbReference type="GO" id="GO:0000287">
    <property type="term" value="F:magnesium ion binding"/>
    <property type="evidence" value="ECO:0007669"/>
    <property type="project" value="UniProtKB-UniRule"/>
</dbReference>
<dbReference type="GO" id="GO:0006310">
    <property type="term" value="P:DNA recombination"/>
    <property type="evidence" value="ECO:0007669"/>
    <property type="project" value="UniProtKB-UniRule"/>
</dbReference>
<dbReference type="GO" id="GO:0006281">
    <property type="term" value="P:DNA repair"/>
    <property type="evidence" value="ECO:0007669"/>
    <property type="project" value="UniProtKB-UniRule"/>
</dbReference>
<dbReference type="CDD" id="cd00523">
    <property type="entry name" value="Holliday_junction_resolvase"/>
    <property type="match status" value="1"/>
</dbReference>
<dbReference type="Gene3D" id="3.40.1350.10">
    <property type="match status" value="1"/>
</dbReference>
<dbReference type="HAMAP" id="MF_01490">
    <property type="entry name" value="HJ_Resolv_Hjc"/>
    <property type="match status" value="1"/>
</dbReference>
<dbReference type="InterPro" id="IPR002732">
    <property type="entry name" value="Hjc"/>
</dbReference>
<dbReference type="InterPro" id="IPR014428">
    <property type="entry name" value="Hjc_arc"/>
</dbReference>
<dbReference type="InterPro" id="IPR011335">
    <property type="entry name" value="Restrct_endonuc-II-like"/>
</dbReference>
<dbReference type="InterPro" id="IPR011856">
    <property type="entry name" value="tRNA_endonuc-like_dom_sf"/>
</dbReference>
<dbReference type="NCBIfam" id="NF040854">
    <property type="entry name" value="Hol_resolv_Hjc"/>
    <property type="match status" value="1"/>
</dbReference>
<dbReference type="PANTHER" id="PTHR39651">
    <property type="entry name" value="HOLLIDAY JUNCTION RESOLVASE HJC"/>
    <property type="match status" value="1"/>
</dbReference>
<dbReference type="PANTHER" id="PTHR39651:SF1">
    <property type="entry name" value="HOLLIDAY JUNCTION RESOLVASE HJC"/>
    <property type="match status" value="1"/>
</dbReference>
<dbReference type="Pfam" id="PF01870">
    <property type="entry name" value="Hjc"/>
    <property type="match status" value="1"/>
</dbReference>
<dbReference type="PIRSF" id="PIRSF004985">
    <property type="entry name" value="Hlld_jn_rslvs_ar"/>
    <property type="match status" value="1"/>
</dbReference>
<dbReference type="SUPFAM" id="SSF52980">
    <property type="entry name" value="Restriction endonuclease-like"/>
    <property type="match status" value="1"/>
</dbReference>
<evidence type="ECO:0000255" key="1"/>
<evidence type="ECO:0000255" key="2">
    <source>
        <dbReference type="HAMAP-Rule" id="MF_01490"/>
    </source>
</evidence>
<evidence type="ECO:0000269" key="3">
    <source>
    </source>
</evidence>
<evidence type="ECO:0000269" key="4">
    <source>
    </source>
</evidence>
<evidence type="ECO:0000269" key="5">
    <source>
    </source>
</evidence>
<evidence type="ECO:0000269" key="6">
    <source>
    </source>
</evidence>
<evidence type="ECO:0000269" key="7">
    <source>
    </source>
</evidence>
<evidence type="ECO:0000269" key="8">
    <source>
    </source>
</evidence>
<evidence type="ECO:0000269" key="9">
    <source>
    </source>
</evidence>
<evidence type="ECO:0000305" key="10"/>
<evidence type="ECO:0007829" key="11">
    <source>
        <dbReference type="PDB" id="4TKD"/>
    </source>
</evidence>
<proteinExistence type="evidence at protein level"/>
<organism>
    <name type="scientific">Saccharolobus solfataricus (strain ATCC 35092 / DSM 1617 / JCM 11322 / P2)</name>
    <name type="common">Sulfolobus solfataricus</name>
    <dbReference type="NCBI Taxonomy" id="273057"/>
    <lineage>
        <taxon>Archaea</taxon>
        <taxon>Thermoproteota</taxon>
        <taxon>Thermoprotei</taxon>
        <taxon>Sulfolobales</taxon>
        <taxon>Sulfolobaceae</taxon>
        <taxon>Saccharolobus</taxon>
    </lineage>
</organism>
<reference key="1">
    <citation type="journal article" date="2000" name="Genome">
        <title>Gene content and organization of a 281-kbp contig from the genome of the extremely thermophilic archaeon, Sulfolobus solfataricus P2.</title>
        <authorList>
            <person name="Charlebois R.L."/>
            <person name="Singh R.K."/>
            <person name="Chan-Weiher C.C.-Y."/>
            <person name="Allard G."/>
            <person name="Chow C."/>
            <person name="Confalonieri F."/>
            <person name="Curtis B."/>
            <person name="Duguet M."/>
            <person name="Erauso G."/>
            <person name="Faguy D."/>
            <person name="Gaasterland T."/>
            <person name="Garrett R.A."/>
            <person name="Gordon P."/>
            <person name="Jeffries A.C."/>
            <person name="Kozera C."/>
            <person name="Kushwaha N."/>
            <person name="Lafleur E."/>
            <person name="Medina N."/>
            <person name="Peng X."/>
            <person name="Penny S.L."/>
            <person name="She Q."/>
            <person name="St Jean A."/>
            <person name="van der Oost J."/>
            <person name="Young F."/>
            <person name="Zivanovic Y."/>
            <person name="Doolittle W.F."/>
            <person name="Ragan M.A."/>
            <person name="Sensen C.W."/>
        </authorList>
    </citation>
    <scope>NUCLEOTIDE SEQUENCE [GENOMIC DNA]</scope>
    <scope>FUNCTION</scope>
    <scope>DNA-BINDING</scope>
    <source>
        <strain>ATCC 35092 / DSM 1617 / JCM 11322 / P2</strain>
    </source>
</reference>
<reference key="2">
    <citation type="journal article" date="2001" name="Proc. Natl. Acad. Sci. U.S.A.">
        <title>The complete genome of the crenarchaeon Sulfolobus solfataricus P2.</title>
        <authorList>
            <person name="She Q."/>
            <person name="Singh R.K."/>
            <person name="Confalonieri F."/>
            <person name="Zivanovic Y."/>
            <person name="Allard G."/>
            <person name="Awayez M.J."/>
            <person name="Chan-Weiher C.C.-Y."/>
            <person name="Clausen I.G."/>
            <person name="Curtis B.A."/>
            <person name="De Moors A."/>
            <person name="Erauso G."/>
            <person name="Fletcher C."/>
            <person name="Gordon P.M.K."/>
            <person name="Heikamp-de Jong I."/>
            <person name="Jeffries A.C."/>
            <person name="Kozera C.J."/>
            <person name="Medina N."/>
            <person name="Peng X."/>
            <person name="Thi-Ngoc H.P."/>
            <person name="Redder P."/>
            <person name="Schenk M.E."/>
            <person name="Theriault C."/>
            <person name="Tolstrup N."/>
            <person name="Charlebois R.L."/>
            <person name="Doolittle W.F."/>
            <person name="Duguet M."/>
            <person name="Gaasterland T."/>
            <person name="Garrett R.A."/>
            <person name="Ragan M.A."/>
            <person name="Sensen C.W."/>
            <person name="Van der Oost J."/>
        </authorList>
    </citation>
    <scope>NUCLEOTIDE SEQUENCE [LARGE SCALE GENOMIC DNA]</scope>
    <source>
        <strain>ATCC 35092 / DSM 1617 / JCM 11322 / P2</strain>
    </source>
</reference>
<reference key="3">
    <citation type="journal article" date="2000" name="J. Biol. Chem.">
        <title>A conserved nuclease domain in the archaeal Holliday junction resolving enzyme Hjc.</title>
        <authorList>
            <person name="Kvaratskhelia M."/>
            <person name="Wardleworth B.N."/>
            <person name="Norman D.G."/>
            <person name="White M.F."/>
        </authorList>
    </citation>
    <scope>FUNCTION</scope>
    <scope>DNA-BINDING</scope>
    <scope>MUTAGENESIS OF GLU-12; ASP-42; GLU-55 AND LYS-57</scope>
    <source>
        <strain>ATCC 35092 / DSM 1617 / JCM 11322 / P2</strain>
    </source>
</reference>
<reference key="4">
    <citation type="journal article" date="2000" name="J. Mol. Biol.">
        <title>Two Holliday junction resolving enzymes in Sulfolobus solfataricus.</title>
        <authorList>
            <person name="Kvaratskhelia M."/>
            <person name="White M.F."/>
        </authorList>
    </citation>
    <scope>FUNCTION</scope>
    <scope>DNA-BINDING</scope>
    <source>
        <strain>ATCC 35092 / DSM 1617 / JCM 11322 / P2</strain>
    </source>
</reference>
<reference key="5">
    <citation type="journal article" date="2002" name="J. Biol. Chem.">
        <title>Holliday junction resolution is modulated by archaeal chromatin components in vitro.</title>
        <authorList>
            <person name="Kvaratskhelia M."/>
            <person name="Wardleworth B.N."/>
            <person name="Bond C.S."/>
            <person name="Fogg J.M."/>
            <person name="Lilley D.M."/>
            <person name="White M.F."/>
        </authorList>
    </citation>
    <scope>FUNCTION</scope>
    <scope>COFACTOR</scope>
    <scope>ACTIVITY REGULATION</scope>
    <scope>DNA-BINDING</scope>
</reference>
<reference key="6">
    <citation type="journal article" date="2004" name="Nucleic Acids Res.">
        <title>Substrate recognition and catalysis by the Holliday junction resolving enzyme Hje.</title>
        <authorList>
            <person name="Middleton C.L."/>
            <person name="Parker J.L."/>
            <person name="Richard D.J."/>
            <person name="White M.F."/>
            <person name="Bond C.S."/>
        </authorList>
    </citation>
    <scope>MUTAGENESIS OF SER-32</scope>
    <source>
        <strain>ATCC 35092 / DSM 1617 / JCM 11322 / P2</strain>
    </source>
</reference>
<reference key="7">
    <citation type="journal article" date="2006" name="J. Mol. Biol.">
        <title>PCNA activates the Holliday junction endonuclease Hjc.</title>
        <authorList>
            <person name="Dorazi R."/>
            <person name="Parker J.L."/>
            <person name="White M.F."/>
        </authorList>
    </citation>
    <scope>FUNCTION</scope>
    <scope>CATALYTIC ACTIVITY</scope>
    <scope>ACTIVITY REGULATION</scope>
    <scope>INTERACTION WITH PCNA1</scope>
    <scope>SUBUNIT</scope>
    <scope>MUTAGENESIS OF 137-ARG--LEU-143</scope>
</reference>
<reference key="8">
    <citation type="journal article" date="2001" name="Proc. Natl. Acad. Sci. U.S.A.">
        <title>Structure of Hjc, a Holliday junction resolvase, from Sulfolobus solfataricus.</title>
        <authorList>
            <person name="Bond C.S."/>
            <person name="Kvaratskhelia M."/>
            <person name="Richard D."/>
            <person name="White M.F."/>
            <person name="Hunter W.N."/>
        </authorList>
    </citation>
    <scope>X-RAY CRYSTALLOGRAPHY (2.15 ANGSTROMS)</scope>
    <scope>SUBUNIT</scope>
</reference>
<sequence length="143" mass="16010">MNAKKRKGSAVERNIVSRLRDKGFAVVRAPASGSKRKDPIPDIIALKNGVIILIEMKSRKDIEGKIYVRREQAEGIIEFARKSGGSLFLGVKKPGVLKFIPFEKLRRTETGNYVADSEIEGLDLEDLVRLVEAKISRTLDNFL</sequence>
<feature type="chain" id="PRO_0000429158" description="Crossover junction endodeoxyribonuclease Hjc">
    <location>
        <begin position="1"/>
        <end position="143"/>
    </location>
</feature>
<feature type="active site" evidence="2">
    <location>
        <position position="32"/>
    </location>
</feature>
<feature type="binding site" evidence="10">
    <location>
        <position position="12"/>
    </location>
    <ligand>
        <name>Mg(2+)</name>
        <dbReference type="ChEBI" id="CHEBI:18420"/>
    </ligand>
</feature>
<feature type="binding site" evidence="10">
    <location>
        <position position="42"/>
    </location>
    <ligand>
        <name>Mg(2+)</name>
        <dbReference type="ChEBI" id="CHEBI:18420"/>
    </ligand>
</feature>
<feature type="binding site" evidence="10">
    <location>
        <position position="55"/>
    </location>
    <ligand>
        <name>Mg(2+)</name>
        <dbReference type="ChEBI" id="CHEBI:18420"/>
    </ligand>
</feature>
<feature type="site" description="Transition state stabilizer" evidence="1">
    <location>
        <position position="57"/>
    </location>
</feature>
<feature type="mutagenesis site" description="No cleavage of 4-way junction DNA. Binds junction DNA normally." evidence="5">
    <original>E</original>
    <variation>Q</variation>
    <location>
        <position position="12"/>
    </location>
</feature>
<feature type="mutagenesis site" description="No cleavage of fixed 4-way junction DNA. Binds junction DNA normally." evidence="8">
    <original>S</original>
    <variation>A</variation>
    <location>
        <position position="32"/>
    </location>
</feature>
<feature type="mutagenesis site" description="No cleavage of 4-way junction DNA. Binds junction DNA normally." evidence="5">
    <original>D</original>
    <variation>N</variation>
    <location>
        <position position="42"/>
    </location>
</feature>
<feature type="mutagenesis site" description="No cleavage of 4-way junction DNA. Binds junction DNA normally." evidence="5">
    <original>E</original>
    <variation>Q</variation>
    <location>
        <position position="55"/>
    </location>
</feature>
<feature type="mutagenesis site" description="1000-fold less cleavage of 4-way junction DNA. Binds junction DNA normally." evidence="5">
    <original>K</original>
    <variation>A</variation>
    <location>
        <position position="57"/>
    </location>
</feature>
<feature type="mutagenesis site" description="No interaction with PCNA1." evidence="9">
    <location>
        <begin position="137"/>
        <end position="143"/>
    </location>
</feature>
<feature type="helix" evidence="11">
    <location>
        <begin position="10"/>
        <end position="21"/>
    </location>
</feature>
<feature type="strand" evidence="11">
    <location>
        <begin position="25"/>
        <end position="28"/>
    </location>
</feature>
<feature type="strand" evidence="11">
    <location>
        <begin position="42"/>
        <end position="47"/>
    </location>
</feature>
<feature type="strand" evidence="11">
    <location>
        <begin position="50"/>
        <end position="57"/>
    </location>
</feature>
<feature type="strand" evidence="11">
    <location>
        <begin position="65"/>
        <end position="68"/>
    </location>
</feature>
<feature type="helix" evidence="11">
    <location>
        <begin position="70"/>
        <end position="83"/>
    </location>
</feature>
<feature type="strand" evidence="11">
    <location>
        <begin position="86"/>
        <end position="91"/>
    </location>
</feature>
<feature type="strand" evidence="11">
    <location>
        <begin position="94"/>
        <end position="96"/>
    </location>
</feature>
<feature type="strand" evidence="11">
    <location>
        <begin position="98"/>
        <end position="101"/>
    </location>
</feature>
<feature type="helix" evidence="11">
    <location>
        <begin position="102"/>
        <end position="104"/>
    </location>
</feature>
<feature type="strand" evidence="11">
    <location>
        <begin position="105"/>
        <end position="107"/>
    </location>
</feature>
<feature type="strand" evidence="11">
    <location>
        <begin position="113"/>
        <end position="115"/>
    </location>
</feature>
<feature type="helix" evidence="11">
    <location>
        <begin position="124"/>
        <end position="135"/>
    </location>
</feature>
<accession>Q7LXU0</accession>
<accession>Q9UWX8</accession>
<gene>
    <name evidence="2" type="primary">hjc</name>
    <name type="ordered locus">SSO0575</name>
    <name type="ORF">ORF-c21_024</name>
</gene>
<name>HJC_SACS2</name>
<comment type="function">
    <text evidence="3 4 5 7 9">A structure-specific endonuclease that resolves Holliday junction (HJ) intermediates during genetic recombination; may have some degree of sequence preference in a mobile junction. Cleaves 4-way DNA junctions introducing paired nicks in opposing strands, leaving a 5'-terminal phosphate and a 3'-terminal hydroxyl group that are subsequently ligated to produce recombinant products. Can cleave all 4 strands 3 bases 3' of the junction center. Cleaves both mobile and immobile junctions. Modifies the structure of the 4-way DNA junction, a model Holliday junction structure. The protein forms multiple complexes with 4-way DNA, suggesting more than 1 homodimer can bind to each junction.</text>
</comment>
<comment type="catalytic activity">
    <reaction evidence="2 9">
        <text>Endonucleolytic cleavage at a junction such as a reciprocal single-stranded crossover between two homologous DNA duplexes (Holliday junction).</text>
        <dbReference type="EC" id="3.1.21.10"/>
    </reaction>
</comment>
<comment type="cofactor">
    <cofactor evidence="2 7">
        <name>Mg(2+)</name>
        <dbReference type="ChEBI" id="CHEBI:18420"/>
    </cofactor>
    <text evidence="2 7">Binds 1 Mg(2+) ion per subunit.</text>
</comment>
<comment type="activity regulation">
    <text evidence="7 9">Autoinhibits at very high concentrations, possibly because of extreme junction distortion. Inhibition (and activity at low concentrations of enzyme) is stimulated by dsDNA and Sso7d (PubMed:11709558). Activity stimulated by PCNA subunit PCNA1 (PubMed:17011573).</text>
</comment>
<comment type="subunit">
    <text evidence="2 6 9 10">Homodimer (Probable). Interacts with PCNA subunit PCNA1.</text>
</comment>
<comment type="miscellaneous">
    <text evidence="4">A second Holliday junction resolving enzyme, Hje, with different substrate specificity exists in this organism.</text>
</comment>
<comment type="similarity">
    <text evidence="2">Belongs to the Holliday junction resolvase Hjc family.</text>
</comment>
<protein>
    <recommendedName>
        <fullName evidence="2">Crossover junction endodeoxyribonuclease Hjc</fullName>
        <shortName evidence="2">Hjc</shortName>
        <ecNumber evidence="2">3.1.21.10</ecNumber>
    </recommendedName>
    <alternativeName>
        <fullName evidence="2">Holliday junction resolvase Hjc</fullName>
    </alternativeName>
</protein>